<sequence>MSDLESAYRLEYFEEEGFHRRECVSCGAHFWTRDGDRETCGEPPCEDYQFIDNPGFDASYSLTEMRSAMVSYFERAGHDSIDPYPVAANRWRDDVLLTQASIYDFQPHVTSGASPPPANPLVVSQPCIRMQDIDNVGKTGRHTMAFEMLGHHAFNADEGTDYAYDGEVYWKDTAVEHCEGLLADVGVSLDEVTFIEDPWVGGGNAGAAFEVIYRGLELATLVFMSLERDPDGEYEMKDGHTYAEMDRRVVDTGYGVERWTWMSQGTPTVYEAVYPDTIDFLKEQAGIEHTDEEAELVHRASKHAGNLDIDEVADIEDARAGIAAELGVDAERLTELVAPLEDIYAIADHSRVLAYMFGDGIVPSNVGTGYLARMVLRRTKRLVDDIGADVPLDELVDMQADRLGYENRDTIRSIVRSEVEKYGETLERGGRRVEQLAEEYADRGEPVPTDELIELYDSHGIQPGMVADIAADVGATVDAPDDFYSLVAARHDDGDSGAAGGDGGGDDRLADLPETETLYYDDAYGSEFEAVVLDVFEREGEDGDGAFDVVLDQTMFYPEGGGQPADTGVLTGDDHTVDVIDVQERDGVVLHRTTDNPGKGEFVRGQIDTERRRRLMAHHTATHIVVYAARQVLGEHVRQAGAQKGVDSSRIDVTHYERVDRETVKEIERVANEIVRANTSVQCEWPDRHEAEAEYGFDLYQGGIPAGEQIRLVHVDDDVQACGGTHVARTGEIGSIKILNAERVQDGVERLTFAAGAAAVEHVQGQEDDLRAAAEVLDVTPAEVPETAERFFTEWKDRGKTIDDLKEQLAEARASGGGAGEEVDVAGTTAVVQRVDGDMDELQATANALVDGGQVAVVGSGADGAQFVVGVPDGVPVNAGEVVGELAAMVGGGGGGPPDFAQGGGPDAERLDDALSRAADVLGDAASAE</sequence>
<evidence type="ECO:0000255" key="1">
    <source>
        <dbReference type="HAMAP-Rule" id="MF_00036"/>
    </source>
</evidence>
<organism>
    <name type="scientific">Halobacterium salinarum (strain ATCC 700922 / JCM 11081 / NRC-1)</name>
    <name type="common">Halobacterium halobium</name>
    <dbReference type="NCBI Taxonomy" id="64091"/>
    <lineage>
        <taxon>Archaea</taxon>
        <taxon>Methanobacteriati</taxon>
        <taxon>Methanobacteriota</taxon>
        <taxon>Stenosarchaea group</taxon>
        <taxon>Halobacteria</taxon>
        <taxon>Halobacteriales</taxon>
        <taxon>Halobacteriaceae</taxon>
        <taxon>Halobacterium</taxon>
        <taxon>Halobacterium salinarum NRC-34001</taxon>
    </lineage>
</organism>
<name>SYA_HALSA</name>
<keyword id="KW-0030">Aminoacyl-tRNA synthetase</keyword>
<keyword id="KW-0067">ATP-binding</keyword>
<keyword id="KW-0963">Cytoplasm</keyword>
<keyword id="KW-0436">Ligase</keyword>
<keyword id="KW-0479">Metal-binding</keyword>
<keyword id="KW-0547">Nucleotide-binding</keyword>
<keyword id="KW-0648">Protein biosynthesis</keyword>
<keyword id="KW-1185">Reference proteome</keyword>
<keyword id="KW-0694">RNA-binding</keyword>
<keyword id="KW-0820">tRNA-binding</keyword>
<keyword id="KW-0862">Zinc</keyword>
<reference key="1">
    <citation type="journal article" date="2000" name="Proc. Natl. Acad. Sci. U.S.A.">
        <title>Genome sequence of Halobacterium species NRC-1.</title>
        <authorList>
            <person name="Ng W.V."/>
            <person name="Kennedy S.P."/>
            <person name="Mahairas G.G."/>
            <person name="Berquist B."/>
            <person name="Pan M."/>
            <person name="Shukla H.D."/>
            <person name="Lasky S.R."/>
            <person name="Baliga N.S."/>
            <person name="Thorsson V."/>
            <person name="Sbrogna J."/>
            <person name="Swartzell S."/>
            <person name="Weir D."/>
            <person name="Hall J."/>
            <person name="Dahl T.A."/>
            <person name="Welti R."/>
            <person name="Goo Y.A."/>
            <person name="Leithauser B."/>
            <person name="Keller K."/>
            <person name="Cruz R."/>
            <person name="Danson M.J."/>
            <person name="Hough D.W."/>
            <person name="Maddocks D.G."/>
            <person name="Jablonski P.E."/>
            <person name="Krebs M.P."/>
            <person name="Angevine C.M."/>
            <person name="Dale H."/>
            <person name="Isenbarger T.A."/>
            <person name="Peck R.F."/>
            <person name="Pohlschroder M."/>
            <person name="Spudich J.L."/>
            <person name="Jung K.-H."/>
            <person name="Alam M."/>
            <person name="Freitas T."/>
            <person name="Hou S."/>
            <person name="Daniels C.J."/>
            <person name="Dennis P.P."/>
            <person name="Omer A.D."/>
            <person name="Ebhardt H."/>
            <person name="Lowe T.M."/>
            <person name="Liang P."/>
            <person name="Riley M."/>
            <person name="Hood L."/>
            <person name="DasSarma S."/>
        </authorList>
    </citation>
    <scope>NUCLEOTIDE SEQUENCE [LARGE SCALE GENOMIC DNA]</scope>
    <source>
        <strain>ATCC 700922 / JCM 11081 / NRC-1</strain>
    </source>
</reference>
<comment type="function">
    <text evidence="1">Catalyzes the attachment of alanine to tRNA(Ala) in a two-step reaction: alanine is first activated by ATP to form Ala-AMP and then transferred to the acceptor end of tRNA(Ala). Also edits incorrectly charged Ser-tRNA(Ala) and Gly-tRNA(Ala) via its editing domain.</text>
</comment>
<comment type="catalytic activity">
    <reaction evidence="1">
        <text>tRNA(Ala) + L-alanine + ATP = L-alanyl-tRNA(Ala) + AMP + diphosphate</text>
        <dbReference type="Rhea" id="RHEA:12540"/>
        <dbReference type="Rhea" id="RHEA-COMP:9657"/>
        <dbReference type="Rhea" id="RHEA-COMP:9923"/>
        <dbReference type="ChEBI" id="CHEBI:30616"/>
        <dbReference type="ChEBI" id="CHEBI:33019"/>
        <dbReference type="ChEBI" id="CHEBI:57972"/>
        <dbReference type="ChEBI" id="CHEBI:78442"/>
        <dbReference type="ChEBI" id="CHEBI:78497"/>
        <dbReference type="ChEBI" id="CHEBI:456215"/>
        <dbReference type="EC" id="6.1.1.7"/>
    </reaction>
</comment>
<comment type="cofactor">
    <cofactor evidence="1">
        <name>Zn(2+)</name>
        <dbReference type="ChEBI" id="CHEBI:29105"/>
    </cofactor>
    <text evidence="1">Binds 1 zinc ion per subunit.</text>
</comment>
<comment type="subcellular location">
    <subcellularLocation>
        <location evidence="1">Cytoplasm</location>
    </subcellularLocation>
</comment>
<comment type="domain">
    <text evidence="1">Consists of three domains; the N-terminal catalytic domain, the editing domain and the C-terminal C-Ala domain. The editing domain removes incorrectly charged amino acids, while the C-Ala domain, along with tRNA(Ala), serves as a bridge to cooperatively bring together the editing and aminoacylation centers thus stimulating deacylation of misacylated tRNAs.</text>
</comment>
<comment type="similarity">
    <text evidence="1">Belongs to the class-II aminoacyl-tRNA synthetase family.</text>
</comment>
<accession>Q9HN24</accession>
<protein>
    <recommendedName>
        <fullName evidence="1">Alanine--tRNA ligase</fullName>
        <ecNumber evidence="1">6.1.1.7</ecNumber>
    </recommendedName>
    <alternativeName>
        <fullName evidence="1">Alanyl-tRNA synthetase</fullName>
        <shortName evidence="1">AlaRS</shortName>
    </alternativeName>
</protein>
<feature type="chain" id="PRO_0000075262" description="Alanine--tRNA ligase">
    <location>
        <begin position="1"/>
        <end position="929"/>
    </location>
</feature>
<feature type="binding site" evidence="1">
    <location>
        <position position="619"/>
    </location>
    <ligand>
        <name>Zn(2+)</name>
        <dbReference type="ChEBI" id="CHEBI:29105"/>
    </ligand>
</feature>
<feature type="binding site" evidence="1">
    <location>
        <position position="623"/>
    </location>
    <ligand>
        <name>Zn(2+)</name>
        <dbReference type="ChEBI" id="CHEBI:29105"/>
    </ligand>
</feature>
<feature type="binding site" evidence="1">
    <location>
        <position position="722"/>
    </location>
    <ligand>
        <name>Zn(2+)</name>
        <dbReference type="ChEBI" id="CHEBI:29105"/>
    </ligand>
</feature>
<feature type="binding site" evidence="1">
    <location>
        <position position="726"/>
    </location>
    <ligand>
        <name>Zn(2+)</name>
        <dbReference type="ChEBI" id="CHEBI:29105"/>
    </ligand>
</feature>
<gene>
    <name evidence="1" type="primary">alaS</name>
    <name type="ordered locus">VNG_2283G</name>
</gene>
<proteinExistence type="inferred from homology"/>
<dbReference type="EC" id="6.1.1.7" evidence="1"/>
<dbReference type="EMBL" id="AE004437">
    <property type="protein sequence ID" value="AAG20397.1"/>
    <property type="molecule type" value="Genomic_DNA"/>
</dbReference>
<dbReference type="PIR" id="A84379">
    <property type="entry name" value="A84379"/>
</dbReference>
<dbReference type="RefSeq" id="WP_010903698.1">
    <property type="nucleotide sequence ID" value="NC_002607.1"/>
</dbReference>
<dbReference type="SMR" id="Q9HN24"/>
<dbReference type="FunCoup" id="Q9HN24">
    <property type="interactions" value="165"/>
</dbReference>
<dbReference type="STRING" id="64091.VNG_2283G"/>
<dbReference type="PaxDb" id="64091-VNG_2283G"/>
<dbReference type="GeneID" id="68694829"/>
<dbReference type="KEGG" id="hal:VNG_2283G"/>
<dbReference type="PATRIC" id="fig|64091.14.peg.1760"/>
<dbReference type="HOGENOM" id="CLU_004485_4_0_2"/>
<dbReference type="InParanoid" id="Q9HN24"/>
<dbReference type="OrthoDB" id="7506at2157"/>
<dbReference type="PhylomeDB" id="Q9HN24"/>
<dbReference type="Proteomes" id="UP000000554">
    <property type="component" value="Chromosome"/>
</dbReference>
<dbReference type="GO" id="GO:0005737">
    <property type="term" value="C:cytoplasm"/>
    <property type="evidence" value="ECO:0007669"/>
    <property type="project" value="UniProtKB-SubCell"/>
</dbReference>
<dbReference type="GO" id="GO:0004813">
    <property type="term" value="F:alanine-tRNA ligase activity"/>
    <property type="evidence" value="ECO:0000318"/>
    <property type="project" value="GO_Central"/>
</dbReference>
<dbReference type="GO" id="GO:0002161">
    <property type="term" value="F:aminoacyl-tRNA deacylase activity"/>
    <property type="evidence" value="ECO:0000318"/>
    <property type="project" value="GO_Central"/>
</dbReference>
<dbReference type="GO" id="GO:0005524">
    <property type="term" value="F:ATP binding"/>
    <property type="evidence" value="ECO:0007669"/>
    <property type="project" value="UniProtKB-UniRule"/>
</dbReference>
<dbReference type="GO" id="GO:0000049">
    <property type="term" value="F:tRNA binding"/>
    <property type="evidence" value="ECO:0007669"/>
    <property type="project" value="UniProtKB-KW"/>
</dbReference>
<dbReference type="GO" id="GO:0008270">
    <property type="term" value="F:zinc ion binding"/>
    <property type="evidence" value="ECO:0007669"/>
    <property type="project" value="UniProtKB-UniRule"/>
</dbReference>
<dbReference type="GO" id="GO:0006419">
    <property type="term" value="P:alanyl-tRNA aminoacylation"/>
    <property type="evidence" value="ECO:0000318"/>
    <property type="project" value="GO_Central"/>
</dbReference>
<dbReference type="FunFam" id="3.10.310.40:FF:000001">
    <property type="entry name" value="Alanine--tRNA ligase"/>
    <property type="match status" value="1"/>
</dbReference>
<dbReference type="FunFam" id="3.30.54.20:FF:000005">
    <property type="entry name" value="Alanine--tRNA ligase"/>
    <property type="match status" value="1"/>
</dbReference>
<dbReference type="FunFam" id="3.30.930.10:FF:000056">
    <property type="entry name" value="Alanine--tRNA ligase"/>
    <property type="match status" value="1"/>
</dbReference>
<dbReference type="Gene3D" id="2.40.30.130">
    <property type="match status" value="1"/>
</dbReference>
<dbReference type="Gene3D" id="3.10.310.40">
    <property type="match status" value="1"/>
</dbReference>
<dbReference type="Gene3D" id="3.30.54.20">
    <property type="match status" value="1"/>
</dbReference>
<dbReference type="Gene3D" id="6.10.250.550">
    <property type="match status" value="1"/>
</dbReference>
<dbReference type="Gene3D" id="3.30.930.10">
    <property type="entry name" value="Bira Bifunctional Protein, Domain 2"/>
    <property type="match status" value="1"/>
</dbReference>
<dbReference type="Gene3D" id="3.30.980.10">
    <property type="entry name" value="Threonyl-trna Synthetase, Chain A, domain 2"/>
    <property type="match status" value="1"/>
</dbReference>
<dbReference type="HAMAP" id="MF_00036_A">
    <property type="entry name" value="Ala_tRNA_synth_A"/>
    <property type="match status" value="1"/>
</dbReference>
<dbReference type="InterPro" id="IPR045864">
    <property type="entry name" value="aa-tRNA-synth_II/BPL/LPL"/>
</dbReference>
<dbReference type="InterPro" id="IPR002318">
    <property type="entry name" value="Ala-tRNA-lgiase_IIc"/>
</dbReference>
<dbReference type="InterPro" id="IPR018162">
    <property type="entry name" value="Ala-tRNA-ligase_IIc_anticod-bd"/>
</dbReference>
<dbReference type="InterPro" id="IPR018165">
    <property type="entry name" value="Ala-tRNA-synth_IIc_core"/>
</dbReference>
<dbReference type="InterPro" id="IPR018164">
    <property type="entry name" value="Ala-tRNA-synth_IIc_N"/>
</dbReference>
<dbReference type="InterPro" id="IPR022429">
    <property type="entry name" value="Ala-tRNA_lgiase_arc"/>
</dbReference>
<dbReference type="InterPro" id="IPR050058">
    <property type="entry name" value="Ala-tRNA_ligase"/>
</dbReference>
<dbReference type="InterPro" id="IPR003156">
    <property type="entry name" value="DHHA1_dom"/>
</dbReference>
<dbReference type="InterPro" id="IPR018163">
    <property type="entry name" value="Thr/Ala-tRNA-synth_IIc_edit"/>
</dbReference>
<dbReference type="InterPro" id="IPR009000">
    <property type="entry name" value="Transl_B-barrel_sf"/>
</dbReference>
<dbReference type="InterPro" id="IPR012947">
    <property type="entry name" value="tRNA_SAD"/>
</dbReference>
<dbReference type="NCBIfam" id="TIGR03683">
    <property type="entry name" value="A-tRNA_syn_arch"/>
    <property type="match status" value="1"/>
</dbReference>
<dbReference type="NCBIfam" id="TIGR00344">
    <property type="entry name" value="alaS"/>
    <property type="match status" value="1"/>
</dbReference>
<dbReference type="PANTHER" id="PTHR11777:SF9">
    <property type="entry name" value="ALANINE--TRNA LIGASE, CYTOPLASMIC"/>
    <property type="match status" value="1"/>
</dbReference>
<dbReference type="PANTHER" id="PTHR11777">
    <property type="entry name" value="ALANYL-TRNA SYNTHETASE"/>
    <property type="match status" value="1"/>
</dbReference>
<dbReference type="Pfam" id="PF02272">
    <property type="entry name" value="DHHA1"/>
    <property type="match status" value="1"/>
</dbReference>
<dbReference type="Pfam" id="PF01411">
    <property type="entry name" value="tRNA-synt_2c"/>
    <property type="match status" value="1"/>
</dbReference>
<dbReference type="Pfam" id="PF07973">
    <property type="entry name" value="tRNA_SAD"/>
    <property type="match status" value="1"/>
</dbReference>
<dbReference type="PRINTS" id="PR00980">
    <property type="entry name" value="TRNASYNTHALA"/>
</dbReference>
<dbReference type="SMART" id="SM00863">
    <property type="entry name" value="tRNA_SAD"/>
    <property type="match status" value="1"/>
</dbReference>
<dbReference type="SUPFAM" id="SSF55681">
    <property type="entry name" value="Class II aaRS and biotin synthetases"/>
    <property type="match status" value="1"/>
</dbReference>
<dbReference type="SUPFAM" id="SSF101353">
    <property type="entry name" value="Putative anticodon-binding domain of alanyl-tRNA synthetase (AlaRS)"/>
    <property type="match status" value="1"/>
</dbReference>
<dbReference type="SUPFAM" id="SSF55186">
    <property type="entry name" value="ThrRS/AlaRS common domain"/>
    <property type="match status" value="1"/>
</dbReference>
<dbReference type="SUPFAM" id="SSF50447">
    <property type="entry name" value="Translation proteins"/>
    <property type="match status" value="1"/>
</dbReference>
<dbReference type="PROSITE" id="PS50860">
    <property type="entry name" value="AA_TRNA_LIGASE_II_ALA"/>
    <property type="match status" value="1"/>
</dbReference>